<gene>
    <name evidence="1" type="primary">gcvH</name>
    <name type="ordered locus">CYA_0482</name>
</gene>
<evidence type="ECO:0000255" key="1">
    <source>
        <dbReference type="HAMAP-Rule" id="MF_00272"/>
    </source>
</evidence>
<evidence type="ECO:0000255" key="2">
    <source>
        <dbReference type="PROSITE-ProRule" id="PRU01066"/>
    </source>
</evidence>
<sequence>MALEYPPHLRYVDTHEYIRVEDDIAVIGITAYAVDQLGDIVFVGLPEEGTEIEKGESFGSVESVKAVEDLYAPVSGKVVAVNKAVVDSPESIADDPYGDGWLIKVRMTNPEDLDDTMSAEAYASLVEGS</sequence>
<feature type="chain" id="PRO_0000302452" description="Glycine cleavage system H protein">
    <location>
        <begin position="1"/>
        <end position="129"/>
    </location>
</feature>
<feature type="domain" description="Lipoyl-binding" evidence="2">
    <location>
        <begin position="24"/>
        <end position="106"/>
    </location>
</feature>
<feature type="modified residue" description="N6-lipoyllysine" evidence="1">
    <location>
        <position position="65"/>
    </location>
</feature>
<proteinExistence type="inferred from homology"/>
<name>GCSH_SYNJA</name>
<accession>Q2JX00</accession>
<organism>
    <name type="scientific">Synechococcus sp. (strain JA-3-3Ab)</name>
    <name type="common">Cyanobacteria bacterium Yellowstone A-Prime</name>
    <dbReference type="NCBI Taxonomy" id="321327"/>
    <lineage>
        <taxon>Bacteria</taxon>
        <taxon>Bacillati</taxon>
        <taxon>Cyanobacteriota</taxon>
        <taxon>Cyanophyceae</taxon>
        <taxon>Synechococcales</taxon>
        <taxon>Synechococcaceae</taxon>
        <taxon>Synechococcus</taxon>
    </lineage>
</organism>
<dbReference type="EMBL" id="CP000239">
    <property type="protein sequence ID" value="ABC98700.1"/>
    <property type="molecule type" value="Genomic_DNA"/>
</dbReference>
<dbReference type="RefSeq" id="WP_011429389.1">
    <property type="nucleotide sequence ID" value="NC_007775.1"/>
</dbReference>
<dbReference type="SMR" id="Q2JX00"/>
<dbReference type="STRING" id="321327.CYA_0482"/>
<dbReference type="KEGG" id="cya:CYA_0482"/>
<dbReference type="eggNOG" id="COG0509">
    <property type="taxonomic scope" value="Bacteria"/>
</dbReference>
<dbReference type="HOGENOM" id="CLU_097408_2_2_3"/>
<dbReference type="OrthoDB" id="9796712at2"/>
<dbReference type="Proteomes" id="UP000008818">
    <property type="component" value="Chromosome"/>
</dbReference>
<dbReference type="GO" id="GO:0005829">
    <property type="term" value="C:cytosol"/>
    <property type="evidence" value="ECO:0007669"/>
    <property type="project" value="TreeGrafter"/>
</dbReference>
<dbReference type="GO" id="GO:0005960">
    <property type="term" value="C:glycine cleavage complex"/>
    <property type="evidence" value="ECO:0007669"/>
    <property type="project" value="InterPro"/>
</dbReference>
<dbReference type="GO" id="GO:0019464">
    <property type="term" value="P:glycine decarboxylation via glycine cleavage system"/>
    <property type="evidence" value="ECO:0007669"/>
    <property type="project" value="UniProtKB-UniRule"/>
</dbReference>
<dbReference type="CDD" id="cd06848">
    <property type="entry name" value="GCS_H"/>
    <property type="match status" value="1"/>
</dbReference>
<dbReference type="Gene3D" id="2.40.50.100">
    <property type="match status" value="1"/>
</dbReference>
<dbReference type="HAMAP" id="MF_00272">
    <property type="entry name" value="GcvH"/>
    <property type="match status" value="1"/>
</dbReference>
<dbReference type="InterPro" id="IPR003016">
    <property type="entry name" value="2-oxoA_DH_lipoyl-BS"/>
</dbReference>
<dbReference type="InterPro" id="IPR000089">
    <property type="entry name" value="Biotin_lipoyl"/>
</dbReference>
<dbReference type="InterPro" id="IPR002930">
    <property type="entry name" value="GCV_H"/>
</dbReference>
<dbReference type="InterPro" id="IPR033753">
    <property type="entry name" value="GCV_H/Fam206"/>
</dbReference>
<dbReference type="InterPro" id="IPR017453">
    <property type="entry name" value="GCV_H_sub"/>
</dbReference>
<dbReference type="InterPro" id="IPR011053">
    <property type="entry name" value="Single_hybrid_motif"/>
</dbReference>
<dbReference type="NCBIfam" id="TIGR00527">
    <property type="entry name" value="gcvH"/>
    <property type="match status" value="1"/>
</dbReference>
<dbReference type="NCBIfam" id="NF002270">
    <property type="entry name" value="PRK01202.1"/>
    <property type="match status" value="1"/>
</dbReference>
<dbReference type="PANTHER" id="PTHR11715">
    <property type="entry name" value="GLYCINE CLEAVAGE SYSTEM H PROTEIN"/>
    <property type="match status" value="1"/>
</dbReference>
<dbReference type="PANTHER" id="PTHR11715:SF3">
    <property type="entry name" value="GLYCINE CLEAVAGE SYSTEM H PROTEIN-RELATED"/>
    <property type="match status" value="1"/>
</dbReference>
<dbReference type="Pfam" id="PF01597">
    <property type="entry name" value="GCV_H"/>
    <property type="match status" value="1"/>
</dbReference>
<dbReference type="SUPFAM" id="SSF51230">
    <property type="entry name" value="Single hybrid motif"/>
    <property type="match status" value="1"/>
</dbReference>
<dbReference type="PROSITE" id="PS50968">
    <property type="entry name" value="BIOTINYL_LIPOYL"/>
    <property type="match status" value="1"/>
</dbReference>
<dbReference type="PROSITE" id="PS00189">
    <property type="entry name" value="LIPOYL"/>
    <property type="match status" value="1"/>
</dbReference>
<protein>
    <recommendedName>
        <fullName evidence="1">Glycine cleavage system H protein</fullName>
    </recommendedName>
</protein>
<keyword id="KW-0450">Lipoyl</keyword>
<comment type="function">
    <text evidence="1">The glycine cleavage system catalyzes the degradation of glycine. The H protein shuttles the methylamine group of glycine from the P protein to the T protein.</text>
</comment>
<comment type="cofactor">
    <cofactor evidence="1">
        <name>(R)-lipoate</name>
        <dbReference type="ChEBI" id="CHEBI:83088"/>
    </cofactor>
    <text evidence="1">Binds 1 lipoyl cofactor covalently.</text>
</comment>
<comment type="subunit">
    <text evidence="1">The glycine cleavage system is composed of four proteins: P, T, L and H.</text>
</comment>
<comment type="similarity">
    <text evidence="1">Belongs to the GcvH family.</text>
</comment>
<reference key="1">
    <citation type="journal article" date="2007" name="ISME J.">
        <title>Population level functional diversity in a microbial community revealed by comparative genomic and metagenomic analyses.</title>
        <authorList>
            <person name="Bhaya D."/>
            <person name="Grossman A.R."/>
            <person name="Steunou A.-S."/>
            <person name="Khuri N."/>
            <person name="Cohan F.M."/>
            <person name="Hamamura N."/>
            <person name="Melendrez M.C."/>
            <person name="Bateson M.M."/>
            <person name="Ward D.M."/>
            <person name="Heidelberg J.F."/>
        </authorList>
    </citation>
    <scope>NUCLEOTIDE SEQUENCE [LARGE SCALE GENOMIC DNA]</scope>
    <source>
        <strain>JA-3-3Ab</strain>
    </source>
</reference>